<organism>
    <name type="scientific">Lactiplantibacillus plantarum (strain ATCC BAA-793 / NCIMB 8826 / WCFS1)</name>
    <name type="common">Lactobacillus plantarum</name>
    <dbReference type="NCBI Taxonomy" id="220668"/>
    <lineage>
        <taxon>Bacteria</taxon>
        <taxon>Bacillati</taxon>
        <taxon>Bacillota</taxon>
        <taxon>Bacilli</taxon>
        <taxon>Lactobacillales</taxon>
        <taxon>Lactobacillaceae</taxon>
        <taxon>Lactiplantibacillus</taxon>
    </lineage>
</organism>
<evidence type="ECO:0000250" key="1"/>
<evidence type="ECO:0000255" key="2"/>
<evidence type="ECO:0000305" key="3"/>
<reference key="1">
    <citation type="journal article" date="2003" name="Proc. Natl. Acad. Sci. U.S.A.">
        <title>Complete genome sequence of Lactobacillus plantarum WCFS1.</title>
        <authorList>
            <person name="Kleerebezem M."/>
            <person name="Boekhorst J."/>
            <person name="van Kranenburg R."/>
            <person name="Molenaar D."/>
            <person name="Kuipers O.P."/>
            <person name="Leer R."/>
            <person name="Tarchini R."/>
            <person name="Peters S.A."/>
            <person name="Sandbrink H.M."/>
            <person name="Fiers M.W.E.J."/>
            <person name="Stiekema W."/>
            <person name="Klein Lankhorst R.M."/>
            <person name="Bron P.A."/>
            <person name="Hoffer S.M."/>
            <person name="Nierop Groot M.N."/>
            <person name="Kerkhoven R."/>
            <person name="De Vries M."/>
            <person name="Ursing B."/>
            <person name="De Vos W.M."/>
            <person name="Siezen R.J."/>
        </authorList>
    </citation>
    <scope>NUCLEOTIDE SEQUENCE [LARGE SCALE GENOMIC DNA]</scope>
    <source>
        <strain>ATCC BAA-793 / NCIMB 8826 / WCFS1</strain>
    </source>
</reference>
<reference key="2">
    <citation type="journal article" date="2012" name="J. Bacteriol.">
        <title>Complete resequencing and reannotation of the Lactobacillus plantarum WCFS1 genome.</title>
        <authorList>
            <person name="Siezen R.J."/>
            <person name="Francke C."/>
            <person name="Renckens B."/>
            <person name="Boekhorst J."/>
            <person name="Wels M."/>
            <person name="Kleerebezem M."/>
            <person name="van Hijum S.A."/>
        </authorList>
    </citation>
    <scope>NUCLEOTIDE SEQUENCE [LARGE SCALE GENOMIC DNA]</scope>
    <scope>GENOME REANNOTATION</scope>
    <source>
        <strain>ATCC BAA-793 / NCIMB 8826 / WCFS1</strain>
    </source>
</reference>
<gene>
    <name type="primary">prsA1</name>
    <name type="synonym">prtM1</name>
    <name type="ordered locus">lp_1452</name>
</gene>
<name>PRSA1_LACPL</name>
<comment type="function">
    <text evidence="1">Plays a major role in protein secretion by helping the post-translocational extracellular folding of several secreted proteins.</text>
</comment>
<comment type="catalytic activity">
    <reaction>
        <text>[protein]-peptidylproline (omega=180) = [protein]-peptidylproline (omega=0)</text>
        <dbReference type="Rhea" id="RHEA:16237"/>
        <dbReference type="Rhea" id="RHEA-COMP:10747"/>
        <dbReference type="Rhea" id="RHEA-COMP:10748"/>
        <dbReference type="ChEBI" id="CHEBI:83833"/>
        <dbReference type="ChEBI" id="CHEBI:83834"/>
        <dbReference type="EC" id="5.2.1.8"/>
    </reaction>
</comment>
<comment type="subcellular location">
    <subcellularLocation>
        <location evidence="3">Cell membrane</location>
        <topology evidence="3">Lipid-anchor</topology>
    </subcellularLocation>
</comment>
<comment type="similarity">
    <text evidence="3">Belongs to the PrsA family.</text>
</comment>
<accession>Q88X05</accession>
<accession>F9UNJ3</accession>
<dbReference type="EC" id="5.2.1.8"/>
<dbReference type="EMBL" id="AL935263">
    <property type="protein sequence ID" value="CCC78782.1"/>
    <property type="molecule type" value="Genomic_DNA"/>
</dbReference>
<dbReference type="RefSeq" id="WP_003640249.1">
    <property type="nucleotide sequence ID" value="NC_004567.2"/>
</dbReference>
<dbReference type="RefSeq" id="YP_004889296.1">
    <property type="nucleotide sequence ID" value="NC_004567.2"/>
</dbReference>
<dbReference type="SMR" id="Q88X05"/>
<dbReference type="STRING" id="220668.lp_1452"/>
<dbReference type="EnsemblBacteria" id="CCC78782">
    <property type="protein sequence ID" value="CCC78782"/>
    <property type="gene ID" value="lp_1452"/>
</dbReference>
<dbReference type="KEGG" id="lpl:lp_1452"/>
<dbReference type="PATRIC" id="fig|220668.9.peg.1215"/>
<dbReference type="eggNOG" id="COG0760">
    <property type="taxonomic scope" value="Bacteria"/>
</dbReference>
<dbReference type="HOGENOM" id="CLU_034646_6_1_9"/>
<dbReference type="OrthoDB" id="14196at2"/>
<dbReference type="PhylomeDB" id="Q88X05"/>
<dbReference type="Proteomes" id="UP000000432">
    <property type="component" value="Chromosome"/>
</dbReference>
<dbReference type="GO" id="GO:0005886">
    <property type="term" value="C:plasma membrane"/>
    <property type="evidence" value="ECO:0007669"/>
    <property type="project" value="UniProtKB-SubCell"/>
</dbReference>
<dbReference type="GO" id="GO:0003755">
    <property type="term" value="F:peptidyl-prolyl cis-trans isomerase activity"/>
    <property type="evidence" value="ECO:0007669"/>
    <property type="project" value="UniProtKB-UniRule"/>
</dbReference>
<dbReference type="GO" id="GO:0006457">
    <property type="term" value="P:protein folding"/>
    <property type="evidence" value="ECO:0007669"/>
    <property type="project" value="UniProtKB-UniRule"/>
</dbReference>
<dbReference type="Gene3D" id="3.10.50.40">
    <property type="match status" value="1"/>
</dbReference>
<dbReference type="Gene3D" id="1.10.4030.10">
    <property type="entry name" value="Porin chaperone SurA, peptide-binding domain"/>
    <property type="match status" value="1"/>
</dbReference>
<dbReference type="HAMAP" id="MF_01145">
    <property type="entry name" value="Foldase_PrsA"/>
    <property type="match status" value="1"/>
</dbReference>
<dbReference type="InterPro" id="IPR023059">
    <property type="entry name" value="Foldase_PrsA"/>
</dbReference>
<dbReference type="InterPro" id="IPR046357">
    <property type="entry name" value="PPIase_dom_sf"/>
</dbReference>
<dbReference type="InterPro" id="IPR000297">
    <property type="entry name" value="PPIase_PpiC"/>
</dbReference>
<dbReference type="InterPro" id="IPR050245">
    <property type="entry name" value="PrsA_foldase"/>
</dbReference>
<dbReference type="InterPro" id="IPR027304">
    <property type="entry name" value="Trigger_fact/SurA_dom_sf"/>
</dbReference>
<dbReference type="NCBIfam" id="NF003356">
    <property type="entry name" value="PRK04405.1"/>
    <property type="match status" value="1"/>
</dbReference>
<dbReference type="PANTHER" id="PTHR47245:SF1">
    <property type="entry name" value="FOLDASE PROTEIN PRSA"/>
    <property type="match status" value="1"/>
</dbReference>
<dbReference type="PANTHER" id="PTHR47245">
    <property type="entry name" value="PEPTIDYLPROLYL ISOMERASE"/>
    <property type="match status" value="1"/>
</dbReference>
<dbReference type="Pfam" id="PF00639">
    <property type="entry name" value="Rotamase"/>
    <property type="match status" value="1"/>
</dbReference>
<dbReference type="SUPFAM" id="SSF54534">
    <property type="entry name" value="FKBP-like"/>
    <property type="match status" value="1"/>
</dbReference>
<dbReference type="SUPFAM" id="SSF109998">
    <property type="entry name" value="Triger factor/SurA peptide-binding domain-like"/>
    <property type="match status" value="1"/>
</dbReference>
<dbReference type="PROSITE" id="PS50198">
    <property type="entry name" value="PPIC_PPIASE_2"/>
    <property type="match status" value="1"/>
</dbReference>
<dbReference type="PROSITE" id="PS51257">
    <property type="entry name" value="PROKAR_LIPOPROTEIN"/>
    <property type="match status" value="1"/>
</dbReference>
<feature type="signal peptide" evidence="2">
    <location>
        <begin position="1"/>
        <end position="19"/>
    </location>
</feature>
<feature type="chain" id="PRO_0000029307" description="Foldase protein PrsA 1">
    <location>
        <begin position="20"/>
        <end position="298"/>
    </location>
</feature>
<feature type="domain" description="PpiC">
    <location>
        <begin position="136"/>
        <end position="232"/>
    </location>
</feature>
<feature type="lipid moiety-binding region" description="N-palmitoyl cysteine" evidence="2">
    <location>
        <position position="20"/>
    </location>
</feature>
<feature type="lipid moiety-binding region" description="S-diacylglycerol cysteine" evidence="2">
    <location>
        <position position="20"/>
    </location>
</feature>
<sequence length="298" mass="32619">MKKWLIALAGVLLTFTLAGCGSKTVASTSGGKITESQYYSSMKGTSSGKQVLQQMILNKVLEKDYGSKVSTKQVTKQYNTYKSQYGSSFSTVLSQNGLTTKTFKEQLRSNLLLKEAVKDKVKITDKALKKQWKSYEPKVTVQHILVAKSATADKVLDALKKDSSQANFTKLAKKYSTDTTTKNDGGKLSAFDNTNTSYSSKFLTAAFKLKNGEYTTSAVKTSNGYEIIRMIKNPGKGKMSDHTADLKKQIWDNDMSDSTVLQNVVSKVLKGGNVSIKDNDLKDILSSYLSTSSSSSSN</sequence>
<protein>
    <recommendedName>
        <fullName>Foldase protein PrsA 1</fullName>
        <ecNumber>5.2.1.8</ecNumber>
    </recommendedName>
</protein>
<proteinExistence type="inferred from homology"/>
<keyword id="KW-1003">Cell membrane</keyword>
<keyword id="KW-0413">Isomerase</keyword>
<keyword id="KW-0449">Lipoprotein</keyword>
<keyword id="KW-0472">Membrane</keyword>
<keyword id="KW-0564">Palmitate</keyword>
<keyword id="KW-1185">Reference proteome</keyword>
<keyword id="KW-0697">Rotamase</keyword>
<keyword id="KW-0732">Signal</keyword>